<reference key="1">
    <citation type="journal article" date="1996" name="DNA Res.">
        <title>A 570-kb DNA sequence of the Escherichia coli K-12 genome corresponding to the 28.0-40.1 min region on the linkage map.</title>
        <authorList>
            <person name="Aiba H."/>
            <person name="Baba T."/>
            <person name="Fujita K."/>
            <person name="Hayashi K."/>
            <person name="Inada T."/>
            <person name="Isono K."/>
            <person name="Itoh T."/>
            <person name="Kasai H."/>
            <person name="Kashimoto K."/>
            <person name="Kimura S."/>
            <person name="Kitakawa M."/>
            <person name="Kitagawa M."/>
            <person name="Makino K."/>
            <person name="Miki T."/>
            <person name="Mizobuchi K."/>
            <person name="Mori H."/>
            <person name="Mori T."/>
            <person name="Motomura K."/>
            <person name="Nakade S."/>
            <person name="Nakamura Y."/>
            <person name="Nashimoto H."/>
            <person name="Nishio Y."/>
            <person name="Oshima T."/>
            <person name="Saito N."/>
            <person name="Sampei G."/>
            <person name="Seki Y."/>
            <person name="Sivasundaram S."/>
            <person name="Tagami H."/>
            <person name="Takeda J."/>
            <person name="Takemoto K."/>
            <person name="Takeuchi Y."/>
            <person name="Wada C."/>
            <person name="Yamamoto Y."/>
            <person name="Horiuchi T."/>
        </authorList>
    </citation>
    <scope>NUCLEOTIDE SEQUENCE [LARGE SCALE GENOMIC DNA]</scope>
    <source>
        <strain>K12 / W3110 / ATCC 27325 / DSM 5911</strain>
    </source>
</reference>
<reference key="2">
    <citation type="journal article" date="1997" name="Science">
        <title>The complete genome sequence of Escherichia coli K-12.</title>
        <authorList>
            <person name="Blattner F.R."/>
            <person name="Plunkett G. III"/>
            <person name="Bloch C.A."/>
            <person name="Perna N.T."/>
            <person name="Burland V."/>
            <person name="Riley M."/>
            <person name="Collado-Vides J."/>
            <person name="Glasner J.D."/>
            <person name="Rode C.K."/>
            <person name="Mayhew G.F."/>
            <person name="Gregor J."/>
            <person name="Davis N.W."/>
            <person name="Kirkpatrick H.A."/>
            <person name="Goeden M.A."/>
            <person name="Rose D.J."/>
            <person name="Mau B."/>
            <person name="Shao Y."/>
        </authorList>
    </citation>
    <scope>NUCLEOTIDE SEQUENCE [LARGE SCALE GENOMIC DNA]</scope>
    <source>
        <strain>K12 / MG1655 / ATCC 47076</strain>
    </source>
</reference>
<reference key="3">
    <citation type="journal article" date="2006" name="Mol. Syst. Biol.">
        <title>Highly accurate genome sequences of Escherichia coli K-12 strains MG1655 and W3110.</title>
        <authorList>
            <person name="Hayashi K."/>
            <person name="Morooka N."/>
            <person name="Yamamoto Y."/>
            <person name="Fujita K."/>
            <person name="Isono K."/>
            <person name="Choi S."/>
            <person name="Ohtsubo E."/>
            <person name="Baba T."/>
            <person name="Wanner B.L."/>
            <person name="Mori H."/>
            <person name="Horiuchi T."/>
        </authorList>
    </citation>
    <scope>NUCLEOTIDE SEQUENCE [LARGE SCALE GENOMIC DNA]</scope>
    <source>
        <strain>K12 / W3110 / ATCC 27325 / DSM 5911</strain>
    </source>
</reference>
<reference key="4">
    <citation type="journal article" date="2015" name="Microbiology">
        <title>Regulatory role of transcription factor SutR (YdcN) in sulfur utilization in Escherichia coli.</title>
        <authorList>
            <person name="Yamamoto K."/>
            <person name="Nakano M."/>
            <person name="Ishihama A."/>
        </authorList>
    </citation>
    <scope>FUNCTION</scope>
    <scope>DNA-BINDING</scope>
    <scope>INDUCTION</scope>
    <source>
        <strain>K12</strain>
    </source>
</reference>
<feature type="chain" id="PRO_0000149756" description="HTH-type transcriptional regulator SutR">
    <location>
        <begin position="1"/>
        <end position="178"/>
    </location>
</feature>
<feature type="domain" description="HTH cro/C1-type" evidence="2">
    <location>
        <begin position="12"/>
        <end position="66"/>
    </location>
</feature>
<feature type="domain" description="Cupin type-2" evidence="1">
    <location>
        <begin position="105"/>
        <end position="171"/>
    </location>
</feature>
<feature type="DNA-binding region" description="H-T-H motif" evidence="2">
    <location>
        <begin position="23"/>
        <end position="42"/>
    </location>
</feature>
<proteinExistence type="evidence at protein level"/>
<accession>P77626</accession>
<keyword id="KW-0010">Activator</keyword>
<keyword id="KW-0238">DNA-binding</keyword>
<keyword id="KW-1185">Reference proteome</keyword>
<keyword id="KW-0678">Repressor</keyword>
<keyword id="KW-0804">Transcription</keyword>
<keyword id="KW-0805">Transcription regulation</keyword>
<dbReference type="EMBL" id="U00096">
    <property type="protein sequence ID" value="AAC74516.1"/>
    <property type="molecule type" value="Genomic_DNA"/>
</dbReference>
<dbReference type="EMBL" id="AP009048">
    <property type="protein sequence ID" value="BAA15062.1"/>
    <property type="molecule type" value="Genomic_DNA"/>
</dbReference>
<dbReference type="PIR" id="E64895">
    <property type="entry name" value="E64895"/>
</dbReference>
<dbReference type="RefSeq" id="NP_415951.1">
    <property type="nucleotide sequence ID" value="NC_000913.3"/>
</dbReference>
<dbReference type="RefSeq" id="WP_000429155.1">
    <property type="nucleotide sequence ID" value="NZ_SSZK01000021.1"/>
</dbReference>
<dbReference type="SMR" id="P77626"/>
<dbReference type="BioGRID" id="4260184">
    <property type="interactions" value="79"/>
</dbReference>
<dbReference type="DIP" id="DIP-11649N"/>
<dbReference type="FunCoup" id="P77626">
    <property type="interactions" value="12"/>
</dbReference>
<dbReference type="STRING" id="511145.b1434"/>
<dbReference type="PaxDb" id="511145-b1434"/>
<dbReference type="EnsemblBacteria" id="AAC74516">
    <property type="protein sequence ID" value="AAC74516"/>
    <property type="gene ID" value="b1434"/>
</dbReference>
<dbReference type="GeneID" id="75202355"/>
<dbReference type="GeneID" id="946000"/>
<dbReference type="KEGG" id="ecj:JW1430"/>
<dbReference type="KEGG" id="eco:b1434"/>
<dbReference type="KEGG" id="ecoc:C3026_08350"/>
<dbReference type="PATRIC" id="fig|1411691.4.peg.835"/>
<dbReference type="eggNOG" id="COG1396">
    <property type="taxonomic scope" value="Bacteria"/>
</dbReference>
<dbReference type="HOGENOM" id="CLU_085376_5_0_6"/>
<dbReference type="InParanoid" id="P77626"/>
<dbReference type="OMA" id="GMLIQIE"/>
<dbReference type="OrthoDB" id="9792093at2"/>
<dbReference type="PhylomeDB" id="P77626"/>
<dbReference type="BioCyc" id="EcoCyc:G6745-MONOMER"/>
<dbReference type="PRO" id="PR:P77626"/>
<dbReference type="Proteomes" id="UP000000625">
    <property type="component" value="Chromosome"/>
</dbReference>
<dbReference type="GO" id="GO:0003677">
    <property type="term" value="F:DNA binding"/>
    <property type="evidence" value="ECO:0000314"/>
    <property type="project" value="EcoCyc"/>
</dbReference>
<dbReference type="GO" id="GO:0003700">
    <property type="term" value="F:DNA-binding transcription factor activity"/>
    <property type="evidence" value="ECO:0000314"/>
    <property type="project" value="EcoCyc"/>
</dbReference>
<dbReference type="GO" id="GO:0043565">
    <property type="term" value="F:sequence-specific DNA binding"/>
    <property type="evidence" value="ECO:0000314"/>
    <property type="project" value="EcoCyc"/>
</dbReference>
<dbReference type="GO" id="GO:0045892">
    <property type="term" value="P:negative regulation of DNA-templated transcription"/>
    <property type="evidence" value="ECO:0000314"/>
    <property type="project" value="EcoCyc"/>
</dbReference>
<dbReference type="GO" id="GO:0045893">
    <property type="term" value="P:positive regulation of DNA-templated transcription"/>
    <property type="evidence" value="ECO:0000314"/>
    <property type="project" value="EcoCyc"/>
</dbReference>
<dbReference type="GO" id="GO:0006355">
    <property type="term" value="P:regulation of DNA-templated transcription"/>
    <property type="evidence" value="ECO:0000318"/>
    <property type="project" value="GO_Central"/>
</dbReference>
<dbReference type="CDD" id="cd02209">
    <property type="entry name" value="cupin_XRE_C"/>
    <property type="match status" value="1"/>
</dbReference>
<dbReference type="CDD" id="cd00093">
    <property type="entry name" value="HTH_XRE"/>
    <property type="match status" value="1"/>
</dbReference>
<dbReference type="FunFam" id="1.10.260.40:FF:000029">
    <property type="entry name" value="XRE family transcriptional regulator"/>
    <property type="match status" value="1"/>
</dbReference>
<dbReference type="FunFam" id="2.60.120.10:FF:000071">
    <property type="entry name" value="XRE family transcriptional regulator"/>
    <property type="match status" value="1"/>
</dbReference>
<dbReference type="Gene3D" id="2.60.120.10">
    <property type="entry name" value="Jelly Rolls"/>
    <property type="match status" value="1"/>
</dbReference>
<dbReference type="Gene3D" id="1.10.260.40">
    <property type="entry name" value="lambda repressor-like DNA-binding domains"/>
    <property type="match status" value="1"/>
</dbReference>
<dbReference type="InterPro" id="IPR050807">
    <property type="entry name" value="Bact_TransReg_Diox"/>
</dbReference>
<dbReference type="InterPro" id="IPR001387">
    <property type="entry name" value="Cro/C1-type_HTH"/>
</dbReference>
<dbReference type="InterPro" id="IPR013096">
    <property type="entry name" value="Cupin_2"/>
</dbReference>
<dbReference type="InterPro" id="IPR010982">
    <property type="entry name" value="Lambda_DNA-bd_dom_sf"/>
</dbReference>
<dbReference type="InterPro" id="IPR014710">
    <property type="entry name" value="RmlC-like_jellyroll"/>
</dbReference>
<dbReference type="InterPro" id="IPR011051">
    <property type="entry name" value="RmlC_Cupin_sf"/>
</dbReference>
<dbReference type="PANTHER" id="PTHR46797">
    <property type="entry name" value="HTH-TYPE TRANSCRIPTIONAL REGULATOR"/>
    <property type="match status" value="1"/>
</dbReference>
<dbReference type="PANTHER" id="PTHR46797:SF23">
    <property type="entry name" value="HTH-TYPE TRANSCRIPTIONAL REGULATOR SUTR"/>
    <property type="match status" value="1"/>
</dbReference>
<dbReference type="Pfam" id="PF07883">
    <property type="entry name" value="Cupin_2"/>
    <property type="match status" value="1"/>
</dbReference>
<dbReference type="Pfam" id="PF01381">
    <property type="entry name" value="HTH_3"/>
    <property type="match status" value="1"/>
</dbReference>
<dbReference type="SMART" id="SM00530">
    <property type="entry name" value="HTH_XRE"/>
    <property type="match status" value="1"/>
</dbReference>
<dbReference type="SUPFAM" id="SSF47413">
    <property type="entry name" value="lambda repressor-like DNA-binding domains"/>
    <property type="match status" value="1"/>
</dbReference>
<dbReference type="SUPFAM" id="SSF51182">
    <property type="entry name" value="RmlC-like cupins"/>
    <property type="match status" value="1"/>
</dbReference>
<dbReference type="PROSITE" id="PS50943">
    <property type="entry name" value="HTH_CROC1"/>
    <property type="match status" value="1"/>
</dbReference>
<evidence type="ECO:0000255" key="1"/>
<evidence type="ECO:0000255" key="2">
    <source>
        <dbReference type="PROSITE-ProRule" id="PRU00257"/>
    </source>
</evidence>
<evidence type="ECO:0000269" key="3">
    <source>
    </source>
</evidence>
<evidence type="ECO:0000303" key="4">
    <source>
    </source>
</evidence>
<evidence type="ECO:0000305" key="5"/>
<organism>
    <name type="scientific">Escherichia coli (strain K12)</name>
    <dbReference type="NCBI Taxonomy" id="83333"/>
    <lineage>
        <taxon>Bacteria</taxon>
        <taxon>Pseudomonadati</taxon>
        <taxon>Pseudomonadota</taxon>
        <taxon>Gammaproteobacteria</taxon>
        <taxon>Enterobacterales</taxon>
        <taxon>Enterobacteriaceae</taxon>
        <taxon>Escherichia</taxon>
    </lineage>
</organism>
<sequence>MENLARFLSTTLKQLRQQRGWSLSRLAEATGVSKAMLGQIERNESSPTVATLWKIATGLNVPFSTFISPPQSATPSVYDPQQQAMVITSLFPYDPQLCFEHFSIQMASGAISESTPHEKGVIEHVVVIDGQLDLCVDGEWQTLNCGEGVRFAADVTHIYRNGGEQTVHFHSLIHYPRS</sequence>
<gene>
    <name evidence="4" type="primary">sutR</name>
    <name type="synonym">ydcN</name>
    <name type="ordered locus">b1434</name>
    <name type="ordered locus">JW1430</name>
</gene>
<name>SUTR_ECOLI</name>
<protein>
    <recommendedName>
        <fullName evidence="5">HTH-type transcriptional regulator SutR</fullName>
    </recommendedName>
    <alternativeName>
        <fullName evidence="4">Sulfur utilization regulator</fullName>
    </alternativeName>
</protein>
<comment type="function">
    <text evidence="3">Regulates the expression of 12-16 transcription units involved in various steps of sulfur utilization. Represses expression of pfkB, fliZ, cysE, ydcO and its own expression. Activates expression of ypfN. Acts by binding to SutR boxes.</text>
</comment>
<comment type="induction">
    <text evidence="3">Negatively autoregulated.</text>
</comment>